<organismHost>
    <name type="scientific">Aves</name>
    <dbReference type="NCBI Taxonomy" id="8782"/>
</organismHost>
<organismHost>
    <name type="scientific">Homo sapiens</name>
    <name type="common">Human</name>
    <dbReference type="NCBI Taxonomy" id="9606"/>
</organismHost>
<organismHost>
    <name type="scientific">Sus scrofa</name>
    <name type="common">Pig</name>
    <dbReference type="NCBI Taxonomy" id="9823"/>
</organismHost>
<accession>P18876</accession>
<organism>
    <name type="scientific">Influenza A virus (strain A/Leningrad/1/1954 H1N1)</name>
    <dbReference type="NCBI Taxonomy" id="393557"/>
    <lineage>
        <taxon>Viruses</taxon>
        <taxon>Riboviria</taxon>
        <taxon>Orthornavirae</taxon>
        <taxon>Negarnaviricota</taxon>
        <taxon>Polyploviricotina</taxon>
        <taxon>Insthoviricetes</taxon>
        <taxon>Articulavirales</taxon>
        <taxon>Orthomyxoviridae</taxon>
        <taxon>Alphainfluenzavirus</taxon>
        <taxon>Alphainfluenzavirus influenzae</taxon>
        <taxon>Influenza A virus</taxon>
    </lineage>
</organism>
<comment type="function">
    <text>Binds to sialic acid-containing receptors on the cell surface, bringing about the attachment of the virus particle to the cell. This attachment induces virion internalization of about two third of the virus particles through clathrin-dependent endocytosis and about one third through a clathrin- and caveolin-independent pathway. Plays a major role in the determination of host range restriction and virulence. Class I viral fusion protein. Responsible for penetration of the virus into the cell cytoplasm by mediating the fusion of the membrane of the endocytosed virus particle with the endosomal membrane. Low pH in endosomes induces an irreversible conformational change in HA2, releasing the fusion hydrophobic peptide. Several trimers are required to form a competent fusion pore.</text>
</comment>
<comment type="function">
    <text evidence="2">Binds to sialic acid-containing receptors on the cell surface, bringing about the attachment of the virus particle to the cell. This attachment induces virion internalization either through clathrin-dependent endocytosis or through clathrin- and caveolin-independent pathway. Plays a major role in the determination of host range restriction and virulence. Class I viral fusion protein. Responsible for penetration of the virus into the cell cytoplasm by mediating the fusion of the membrane of the endocytosed virus particle with the endosomal membrane. Low pH in endosomes induces an irreversible conformational change in HA2, releasing the fusion hydrophobic peptide. Several trimers are required to form a competent fusion pore.</text>
</comment>
<comment type="subunit">
    <text evidence="1">Homotrimer of disulfide-linked HA1-HA2. Interacts with human CACNA1C.</text>
</comment>
<comment type="subcellular location">
    <subcellularLocation>
        <location evidence="2">Virion membrane</location>
        <topology evidence="2">Single-pass type I membrane protein</topology>
    </subcellularLocation>
    <subcellularLocation>
        <location evidence="2">Host apical cell membrane</location>
        <topology evidence="2">Single-pass type I membrane protein</topology>
    </subcellularLocation>
    <text evidence="2">Targeted to the apical plasma membrane in epithelial polarized cells through a signal present in the transmembrane domain. Associated with glycosphingolipid- and cholesterol-enriched detergent-resistant lipid rafts.</text>
</comment>
<comment type="PTM">
    <text evidence="2">Palmitoylated.</text>
</comment>
<comment type="PTM">
    <text evidence="2">In natural infection, inactive HA is matured into HA1 and HA2 outside the cell by one or more trypsin-like, arginine-specific endoprotease secreted by the bronchial epithelial cells. One identified protease that may be involved in this process is secreted in lungs by club cells.</text>
</comment>
<comment type="miscellaneous">
    <text>Major glycoprotein, comprises over 80% of the envelope proteins present in virus particle.</text>
</comment>
<comment type="miscellaneous">
    <text>The extent of infection into host organism is determined by HA. Influenza viruses bud from the apical surface of polarized epithelial cells (e.g. bronchial epithelial cells) into lumen of lungs and are therefore usually pneumotropic. The reason is that HA is cleaved by tryptase clara which is restricted to lungs. However, HAs of H5 and H7 pantropic avian viruses subtypes can be cleaved by furin and subtilisin-type enzymes, allowing the virus to grow in other organs than lungs.</text>
</comment>
<comment type="miscellaneous">
    <text evidence="3">The influenza A genome consist of 8 RNA segments. Genetic variation of hemagglutinin and/or neuraminidase genes results in the emergence of new influenza strains. The mechanism of variation can be the result of point mutations or the result of genetic reassortment between segments of two different strains.</text>
</comment>
<comment type="similarity">
    <text evidence="2">Belongs to the influenza viruses hemagglutinin family.</text>
</comment>
<feature type="signal peptide" evidence="2">
    <location>
        <begin position="1"/>
        <end position="17"/>
    </location>
</feature>
<feature type="chain" id="PRO_0000440386" description="Hemagglutinin" evidence="2">
    <location>
        <begin position="18"/>
        <end position="566"/>
    </location>
</feature>
<feature type="chain" id="PRO_0000039014" description="Hemagglutinin HA1 chain" evidence="2">
    <location>
        <begin position="18"/>
        <end position="343"/>
    </location>
</feature>
<feature type="chain" id="PRO_0000039015" description="Hemagglutinin HA2 chain" evidence="2">
    <location>
        <begin position="345"/>
        <end position="566"/>
    </location>
</feature>
<feature type="topological domain" description="Extracellular" evidence="2">
    <location>
        <begin position="18"/>
        <end position="529"/>
    </location>
</feature>
<feature type="transmembrane region" description="Helical" evidence="2">
    <location>
        <begin position="530"/>
        <end position="550"/>
    </location>
</feature>
<feature type="topological domain" description="Cytoplasmic" evidence="2">
    <location>
        <begin position="551"/>
        <end position="566"/>
    </location>
</feature>
<feature type="site" description="Cleavage; by host" evidence="2">
    <location>
        <begin position="344"/>
        <end position="345"/>
    </location>
</feature>
<feature type="lipid moiety-binding region" description="S-palmitoyl cysteine; by host" evidence="2">
    <location>
        <position position="555"/>
    </location>
</feature>
<feature type="lipid moiety-binding region" description="S-palmitoyl cysteine; by host" evidence="2">
    <location>
        <position position="562"/>
    </location>
</feature>
<feature type="lipid moiety-binding region" description="S-palmitoyl cysteine; by host" evidence="2">
    <location>
        <position position="565"/>
    </location>
</feature>
<feature type="glycosylation site" description="N-linked (GlcNAc...) asparagine; by host" evidence="2">
    <location>
        <position position="27"/>
    </location>
</feature>
<feature type="glycosylation site" description="N-linked (GlcNAc...) asparagine; by host" evidence="2">
    <location>
        <position position="28"/>
    </location>
</feature>
<feature type="glycosylation site" description="N-linked (GlcNAc...) asparagine; by host" evidence="2">
    <location>
        <position position="40"/>
    </location>
</feature>
<feature type="glycosylation site" description="N-linked (GlcNAc...) asparagine; by host" evidence="2">
    <location>
        <position position="104"/>
    </location>
</feature>
<feature type="glycosylation site" description="N-linked (GlcNAc...) asparagine; by host" evidence="2">
    <location>
        <position position="144"/>
    </location>
</feature>
<feature type="glycosylation site" description="N-linked (GlcNAc...) asparagine; by host" evidence="2">
    <location>
        <position position="172"/>
    </location>
</feature>
<feature type="glycosylation site" description="N-linked (GlcNAc...) asparagine; by host" evidence="2">
    <location>
        <position position="177"/>
    </location>
</feature>
<feature type="glycosylation site" description="N-linked (GlcNAc...) asparagine; by host" evidence="2">
    <location>
        <position position="286"/>
    </location>
</feature>
<feature type="glycosylation site" description="N-linked (GlcNAc...) asparagine; by host" evidence="2">
    <location>
        <position position="304"/>
    </location>
</feature>
<feature type="glycosylation site" description="N-linked (GlcNAc...) asparagine; by host" evidence="2">
    <location>
        <position position="498"/>
    </location>
</feature>
<feature type="disulfide bond" description="Interchain (between HA1 and HA2 chains)" evidence="2">
    <location>
        <begin position="21"/>
        <end position="481"/>
    </location>
</feature>
<feature type="disulfide bond" evidence="2">
    <location>
        <begin position="59"/>
        <end position="292"/>
    </location>
</feature>
<feature type="disulfide bond" evidence="2">
    <location>
        <begin position="72"/>
        <end position="84"/>
    </location>
</feature>
<feature type="disulfide bond" evidence="2">
    <location>
        <begin position="107"/>
        <end position="153"/>
    </location>
</feature>
<feature type="disulfide bond" evidence="2">
    <location>
        <begin position="296"/>
        <end position="320"/>
    </location>
</feature>
<feature type="disulfide bond" evidence="2">
    <location>
        <begin position="488"/>
        <end position="492"/>
    </location>
</feature>
<name>HEMA_I54A0</name>
<keyword id="KW-1167">Clathrin- and caveolin-independent endocytosis of virus by host</keyword>
<keyword id="KW-1165">Clathrin-mediated endocytosis of virus by host</keyword>
<keyword id="KW-1015">Disulfide bond</keyword>
<keyword id="KW-1170">Fusion of virus membrane with host endosomal membrane</keyword>
<keyword id="KW-1168">Fusion of virus membrane with host membrane</keyword>
<keyword id="KW-0325">Glycoprotein</keyword>
<keyword id="KW-0348">Hemagglutinin</keyword>
<keyword id="KW-1032">Host cell membrane</keyword>
<keyword id="KW-1043">Host membrane</keyword>
<keyword id="KW-0945">Host-virus interaction</keyword>
<keyword id="KW-0449">Lipoprotein</keyword>
<keyword id="KW-0472">Membrane</keyword>
<keyword id="KW-0564">Palmitate</keyword>
<keyword id="KW-0732">Signal</keyword>
<keyword id="KW-0812">Transmembrane</keyword>
<keyword id="KW-1133">Transmembrane helix</keyword>
<keyword id="KW-1161">Viral attachment to host cell</keyword>
<keyword id="KW-0261">Viral envelope protein</keyword>
<keyword id="KW-1162">Viral penetration into host cytoplasm</keyword>
<keyword id="KW-0946">Virion</keyword>
<keyword id="KW-1164">Virus endocytosis by host</keyword>
<keyword id="KW-1160">Virus entry into host cell</keyword>
<protein>
    <recommendedName>
        <fullName evidence="2">Hemagglutinin</fullName>
    </recommendedName>
    <component>
        <recommendedName>
            <fullName evidence="2">Hemagglutinin HA1 chain</fullName>
        </recommendedName>
    </component>
    <component>
        <recommendedName>
            <fullName evidence="2">Hemagglutinin HA2 chain</fullName>
        </recommendedName>
    </component>
</protein>
<dbReference type="EMBL" id="M38312">
    <property type="protein sequence ID" value="AAA43171.1"/>
    <property type="molecule type" value="Genomic_RNA"/>
</dbReference>
<dbReference type="SMR" id="P18876"/>
<dbReference type="GlyCosmos" id="P18876">
    <property type="glycosylation" value="10 sites, No reported glycans"/>
</dbReference>
<dbReference type="GO" id="GO:0020002">
    <property type="term" value="C:host cell plasma membrane"/>
    <property type="evidence" value="ECO:0007669"/>
    <property type="project" value="UniProtKB-SubCell"/>
</dbReference>
<dbReference type="GO" id="GO:0016020">
    <property type="term" value="C:membrane"/>
    <property type="evidence" value="ECO:0007669"/>
    <property type="project" value="UniProtKB-UniRule"/>
</dbReference>
<dbReference type="GO" id="GO:0019031">
    <property type="term" value="C:viral envelope"/>
    <property type="evidence" value="ECO:0007669"/>
    <property type="project" value="UniProtKB-UniRule"/>
</dbReference>
<dbReference type="GO" id="GO:0055036">
    <property type="term" value="C:virion membrane"/>
    <property type="evidence" value="ECO:0007669"/>
    <property type="project" value="UniProtKB-SubCell"/>
</dbReference>
<dbReference type="GO" id="GO:0046789">
    <property type="term" value="F:host cell surface receptor binding"/>
    <property type="evidence" value="ECO:0007669"/>
    <property type="project" value="UniProtKB-UniRule"/>
</dbReference>
<dbReference type="GO" id="GO:0075512">
    <property type="term" value="P:clathrin-dependent endocytosis of virus by host cell"/>
    <property type="evidence" value="ECO:0007669"/>
    <property type="project" value="UniProtKB-UniRule"/>
</dbReference>
<dbReference type="GO" id="GO:0039654">
    <property type="term" value="P:fusion of virus membrane with host endosome membrane"/>
    <property type="evidence" value="ECO:0007669"/>
    <property type="project" value="UniProtKB-UniRule"/>
</dbReference>
<dbReference type="GO" id="GO:0019064">
    <property type="term" value="P:fusion of virus membrane with host plasma membrane"/>
    <property type="evidence" value="ECO:0007669"/>
    <property type="project" value="InterPro"/>
</dbReference>
<dbReference type="GO" id="GO:0046761">
    <property type="term" value="P:viral budding from plasma membrane"/>
    <property type="evidence" value="ECO:0007669"/>
    <property type="project" value="UniProtKB-UniRule"/>
</dbReference>
<dbReference type="GO" id="GO:0019062">
    <property type="term" value="P:virion attachment to host cell"/>
    <property type="evidence" value="ECO:0007669"/>
    <property type="project" value="UniProtKB-KW"/>
</dbReference>
<dbReference type="FunFam" id="3.90.20.10:FF:000002">
    <property type="entry name" value="Hemagglutinin"/>
    <property type="match status" value="1"/>
</dbReference>
<dbReference type="Gene3D" id="3.90.20.10">
    <property type="match status" value="1"/>
</dbReference>
<dbReference type="Gene3D" id="3.90.209.20">
    <property type="match status" value="1"/>
</dbReference>
<dbReference type="Gene3D" id="2.10.77.10">
    <property type="entry name" value="Hemagglutinin Chain A, Domain 2"/>
    <property type="match status" value="1"/>
</dbReference>
<dbReference type="HAMAP" id="MF_04072">
    <property type="entry name" value="INFV_HEMA"/>
    <property type="match status" value="1"/>
</dbReference>
<dbReference type="InterPro" id="IPR008980">
    <property type="entry name" value="Capsid_hemagglutn"/>
</dbReference>
<dbReference type="InterPro" id="IPR013828">
    <property type="entry name" value="Hemagglutn_HA1_a/b_dom_sf"/>
</dbReference>
<dbReference type="InterPro" id="IPR000149">
    <property type="entry name" value="Hemagglutn_influenz_A"/>
</dbReference>
<dbReference type="InterPro" id="IPR001364">
    <property type="entry name" value="Hemagglutn_influenz_A/B"/>
</dbReference>
<dbReference type="Pfam" id="PF00509">
    <property type="entry name" value="Hemagglutinin"/>
    <property type="match status" value="1"/>
</dbReference>
<dbReference type="PRINTS" id="PR00330">
    <property type="entry name" value="HEMAGGLUTN1"/>
</dbReference>
<dbReference type="PRINTS" id="PR00329">
    <property type="entry name" value="HEMAGGLUTN12"/>
</dbReference>
<dbReference type="SUPFAM" id="SSF58064">
    <property type="entry name" value="Influenza hemagglutinin (stalk)"/>
    <property type="match status" value="1"/>
</dbReference>
<dbReference type="SUPFAM" id="SSF49818">
    <property type="entry name" value="Viral protein domain"/>
    <property type="match status" value="1"/>
</dbReference>
<proteinExistence type="inferred from homology"/>
<gene>
    <name evidence="2" type="primary">HA</name>
</gene>
<evidence type="ECO:0000250" key="1">
    <source>
        <dbReference type="UniProtKB" id="Q289M7"/>
    </source>
</evidence>
<evidence type="ECO:0000255" key="2">
    <source>
        <dbReference type="HAMAP-Rule" id="MF_04072"/>
    </source>
</evidence>
<evidence type="ECO:0000305" key="3"/>
<reference key="1">
    <citation type="journal article" date="1984" name="Bioorg. Khim.">
        <title>Synthesis of a full-length DNA copy of the hemagglutinin gene of the the influenza virus A H1N1 subtype, its cloning and primary structure.</title>
        <authorList>
            <person name="Beklemishev A.B."/>
            <person name="Blinov V.M."/>
            <person name="Vasilenko S.K."/>
            <person name="Golovin S.Y."/>
            <person name="Gutorov V.V."/>
            <person name="Karginov V.A."/>
            <person name="Mamaev L.V."/>
            <person name="Mikryukov N.N."/>
            <person name="Netesov S.V."/>
            <person name="Petrenko V.A."/>
            <person name="Petrov N.A."/>
            <person name="Sandakhchiev L.S."/>
        </authorList>
    </citation>
    <scope>NUCLEOTIDE SEQUENCE [GENOMIC RNA]</scope>
</reference>
<sequence>MKAKLLVLLCALSATDADTICIGYHANNSTDTVDTVLEKNVTVTHSVNLLEDSHNGKLCRLKGIAPLQLGKCSIAGWILGNPECESLVSKKSWSYIAETPNSENGTCYPGYFADYEELREQLSSVSSFERFEIFPKERSWPKHNVTRGVTASCSHKGKSSFYRNLLWLTEKNGSYPNLSKSYVNNKEKEVLVLWGVHHPSNIEDQKTIYRKENAYVSVVSSNYNRRFTPEIAERPKVRGQAGRINYYWTLLEPGDTIIFEANGNLIAPWHAFALNRGFGSGIITSNASMDECDTKCQTPQGAINSSLPFQNIHPVTIGECPKYVRSTKLRMVTGLRNIPSIQSRGLFGAIAGFIEGGWTGMIDGWYGYHHQNEQGSGYAADQKSTQNAINGITNKVNSVIEKMNTQFTAVGKEFDELEKRMENLNKKVDDGFLDIWTYNAELLVLLENERTLDFHDSNVKNLYEKVKSQLKNNAKEIGNGCFEFYHKCNNECMESVKNGTYDYPKYSEESKLNREKIDGVKLESMGVYQILAIYSTVASSLVLLVSLGAISFWMCSNGSLQCRICI</sequence>